<evidence type="ECO:0000255" key="1">
    <source>
        <dbReference type="HAMAP-Rule" id="MF_00252"/>
    </source>
</evidence>
<gene>
    <name evidence="1" type="primary">lysS</name>
    <name type="ordered locus">LL0373</name>
    <name type="ORF">L0347</name>
</gene>
<proteinExistence type="inferred from homology"/>
<dbReference type="EC" id="6.1.1.6" evidence="1"/>
<dbReference type="EMBL" id="AE005176">
    <property type="protein sequence ID" value="AAK04471.1"/>
    <property type="molecule type" value="Genomic_DNA"/>
</dbReference>
<dbReference type="PIR" id="E86671">
    <property type="entry name" value="E86671"/>
</dbReference>
<dbReference type="RefSeq" id="NP_266529.1">
    <property type="nucleotide sequence ID" value="NC_002662.1"/>
</dbReference>
<dbReference type="RefSeq" id="WP_010905307.1">
    <property type="nucleotide sequence ID" value="NC_002662.1"/>
</dbReference>
<dbReference type="SMR" id="Q9CII7"/>
<dbReference type="PaxDb" id="272623-L0347"/>
<dbReference type="EnsemblBacteria" id="AAK04471">
    <property type="protein sequence ID" value="AAK04471"/>
    <property type="gene ID" value="L0347"/>
</dbReference>
<dbReference type="GeneID" id="89632547"/>
<dbReference type="KEGG" id="lla:L0347"/>
<dbReference type="PATRIC" id="fig|272623.7.peg.407"/>
<dbReference type="eggNOG" id="COG1190">
    <property type="taxonomic scope" value="Bacteria"/>
</dbReference>
<dbReference type="HOGENOM" id="CLU_008255_6_0_9"/>
<dbReference type="OrthoDB" id="9801152at2"/>
<dbReference type="Proteomes" id="UP000002196">
    <property type="component" value="Chromosome"/>
</dbReference>
<dbReference type="GO" id="GO:0005829">
    <property type="term" value="C:cytosol"/>
    <property type="evidence" value="ECO:0007669"/>
    <property type="project" value="TreeGrafter"/>
</dbReference>
<dbReference type="GO" id="GO:0005524">
    <property type="term" value="F:ATP binding"/>
    <property type="evidence" value="ECO:0007669"/>
    <property type="project" value="UniProtKB-UniRule"/>
</dbReference>
<dbReference type="GO" id="GO:0140096">
    <property type="term" value="F:catalytic activity, acting on a protein"/>
    <property type="evidence" value="ECO:0007669"/>
    <property type="project" value="UniProtKB-ARBA"/>
</dbReference>
<dbReference type="GO" id="GO:0004824">
    <property type="term" value="F:lysine-tRNA ligase activity"/>
    <property type="evidence" value="ECO:0007669"/>
    <property type="project" value="UniProtKB-UniRule"/>
</dbReference>
<dbReference type="GO" id="GO:0000287">
    <property type="term" value="F:magnesium ion binding"/>
    <property type="evidence" value="ECO:0007669"/>
    <property type="project" value="UniProtKB-UniRule"/>
</dbReference>
<dbReference type="GO" id="GO:0016740">
    <property type="term" value="F:transferase activity"/>
    <property type="evidence" value="ECO:0007669"/>
    <property type="project" value="UniProtKB-ARBA"/>
</dbReference>
<dbReference type="GO" id="GO:0000049">
    <property type="term" value="F:tRNA binding"/>
    <property type="evidence" value="ECO:0007669"/>
    <property type="project" value="TreeGrafter"/>
</dbReference>
<dbReference type="GO" id="GO:0006430">
    <property type="term" value="P:lysyl-tRNA aminoacylation"/>
    <property type="evidence" value="ECO:0007669"/>
    <property type="project" value="UniProtKB-UniRule"/>
</dbReference>
<dbReference type="CDD" id="cd00775">
    <property type="entry name" value="LysRS_core"/>
    <property type="match status" value="1"/>
</dbReference>
<dbReference type="CDD" id="cd04322">
    <property type="entry name" value="LysRS_N"/>
    <property type="match status" value="1"/>
</dbReference>
<dbReference type="FunFam" id="2.40.50.140:FF:000024">
    <property type="entry name" value="Lysine--tRNA ligase"/>
    <property type="match status" value="1"/>
</dbReference>
<dbReference type="FunFam" id="3.30.930.10:FF:000001">
    <property type="entry name" value="Lysine--tRNA ligase"/>
    <property type="match status" value="1"/>
</dbReference>
<dbReference type="Gene3D" id="3.30.930.10">
    <property type="entry name" value="Bira Bifunctional Protein, Domain 2"/>
    <property type="match status" value="1"/>
</dbReference>
<dbReference type="Gene3D" id="2.40.50.140">
    <property type="entry name" value="Nucleic acid-binding proteins"/>
    <property type="match status" value="1"/>
</dbReference>
<dbReference type="HAMAP" id="MF_00252">
    <property type="entry name" value="Lys_tRNA_synth_class2"/>
    <property type="match status" value="1"/>
</dbReference>
<dbReference type="InterPro" id="IPR004364">
    <property type="entry name" value="Aa-tRNA-synt_II"/>
</dbReference>
<dbReference type="InterPro" id="IPR006195">
    <property type="entry name" value="aa-tRNA-synth_II"/>
</dbReference>
<dbReference type="InterPro" id="IPR045864">
    <property type="entry name" value="aa-tRNA-synth_II/BPL/LPL"/>
</dbReference>
<dbReference type="InterPro" id="IPR002313">
    <property type="entry name" value="Lys-tRNA-ligase_II"/>
</dbReference>
<dbReference type="InterPro" id="IPR044136">
    <property type="entry name" value="Lys-tRNA-ligase_II_N"/>
</dbReference>
<dbReference type="InterPro" id="IPR018149">
    <property type="entry name" value="Lys-tRNA-synth_II_C"/>
</dbReference>
<dbReference type="InterPro" id="IPR012340">
    <property type="entry name" value="NA-bd_OB-fold"/>
</dbReference>
<dbReference type="InterPro" id="IPR004365">
    <property type="entry name" value="NA-bd_OB_tRNA"/>
</dbReference>
<dbReference type="NCBIfam" id="TIGR00499">
    <property type="entry name" value="lysS_bact"/>
    <property type="match status" value="1"/>
</dbReference>
<dbReference type="NCBIfam" id="NF001756">
    <property type="entry name" value="PRK00484.1"/>
    <property type="match status" value="1"/>
</dbReference>
<dbReference type="PANTHER" id="PTHR42918:SF15">
    <property type="entry name" value="LYSINE--TRNA LIGASE, CHLOROPLASTIC_MITOCHONDRIAL"/>
    <property type="match status" value="1"/>
</dbReference>
<dbReference type="PANTHER" id="PTHR42918">
    <property type="entry name" value="LYSYL-TRNA SYNTHETASE"/>
    <property type="match status" value="1"/>
</dbReference>
<dbReference type="Pfam" id="PF00152">
    <property type="entry name" value="tRNA-synt_2"/>
    <property type="match status" value="1"/>
</dbReference>
<dbReference type="Pfam" id="PF01336">
    <property type="entry name" value="tRNA_anti-codon"/>
    <property type="match status" value="1"/>
</dbReference>
<dbReference type="PRINTS" id="PR00982">
    <property type="entry name" value="TRNASYNTHLYS"/>
</dbReference>
<dbReference type="SUPFAM" id="SSF55681">
    <property type="entry name" value="Class II aaRS and biotin synthetases"/>
    <property type="match status" value="1"/>
</dbReference>
<dbReference type="SUPFAM" id="SSF50249">
    <property type="entry name" value="Nucleic acid-binding proteins"/>
    <property type="match status" value="1"/>
</dbReference>
<dbReference type="PROSITE" id="PS50862">
    <property type="entry name" value="AA_TRNA_LIGASE_II"/>
    <property type="match status" value="1"/>
</dbReference>
<name>SYK_LACLA</name>
<comment type="catalytic activity">
    <reaction evidence="1">
        <text>tRNA(Lys) + L-lysine + ATP = L-lysyl-tRNA(Lys) + AMP + diphosphate</text>
        <dbReference type="Rhea" id="RHEA:20792"/>
        <dbReference type="Rhea" id="RHEA-COMP:9696"/>
        <dbReference type="Rhea" id="RHEA-COMP:9697"/>
        <dbReference type="ChEBI" id="CHEBI:30616"/>
        <dbReference type="ChEBI" id="CHEBI:32551"/>
        <dbReference type="ChEBI" id="CHEBI:33019"/>
        <dbReference type="ChEBI" id="CHEBI:78442"/>
        <dbReference type="ChEBI" id="CHEBI:78529"/>
        <dbReference type="ChEBI" id="CHEBI:456215"/>
        <dbReference type="EC" id="6.1.1.6"/>
    </reaction>
</comment>
<comment type="cofactor">
    <cofactor evidence="1">
        <name>Mg(2+)</name>
        <dbReference type="ChEBI" id="CHEBI:18420"/>
    </cofactor>
    <text evidence="1">Binds 3 Mg(2+) ions per subunit.</text>
</comment>
<comment type="subunit">
    <text evidence="1">Homodimer.</text>
</comment>
<comment type="subcellular location">
    <subcellularLocation>
        <location evidence="1">Cytoplasm</location>
    </subcellularLocation>
</comment>
<comment type="similarity">
    <text evidence="1">Belongs to the class-II aminoacyl-tRNA synthetase family.</text>
</comment>
<sequence>MAEIEELNDQMKVRREKMENLREAGIDPFGHKFTRTHNSQELHEAYDEKTKEELHELALSGIVAGRLMTKRGKGKVGFAHLQDREGQIQLYVRKDEVGEENYEIFKKADLGDFLGVEGEIMKTDMGELSIKAKKLTFLSKALRPLPEKFHGLTDTETRYRKRYLDLISNKESFNRFVTRSKIISEIRRYMDGRGYLEVETPVLNNEAGGAAARPFYTHHNSLDIDMALRIATELHLKRLIVGGMEKVYELGRVFRNEGMDMTHNPEFTTMESYEAYADFEDIMDLTEGIFQHVAKTVVGQDVLEYDGKEINVGGKFKRVHMVDAIKEVAGVDFWPEMTFEEATALAKEHDIHVEKHFTSVGHIINEFFEKYVEETLIQPTFVFGHPKEISPLAKMNEKDPRFTDRFELFINGKEYANAFSELNDPIDQLERFEAQAKAKELGDDEATGVDYDYVEALEHGMPPTGGLGIGIDRLVMLFTGTTSIRDVLLFPTMK</sequence>
<reference key="1">
    <citation type="journal article" date="2001" name="Genome Res.">
        <title>The complete genome sequence of the lactic acid bacterium Lactococcus lactis ssp. lactis IL1403.</title>
        <authorList>
            <person name="Bolotin A."/>
            <person name="Wincker P."/>
            <person name="Mauger S."/>
            <person name="Jaillon O."/>
            <person name="Malarme K."/>
            <person name="Weissenbach J."/>
            <person name="Ehrlich S.D."/>
            <person name="Sorokin A."/>
        </authorList>
    </citation>
    <scope>NUCLEOTIDE SEQUENCE [LARGE SCALE GENOMIC DNA]</scope>
    <source>
        <strain>IL1403</strain>
    </source>
</reference>
<feature type="chain" id="PRO_0000152638" description="Lysine--tRNA ligase">
    <location>
        <begin position="1"/>
        <end position="494"/>
    </location>
</feature>
<feature type="binding site" evidence="1">
    <location>
        <position position="407"/>
    </location>
    <ligand>
        <name>Mg(2+)</name>
        <dbReference type="ChEBI" id="CHEBI:18420"/>
        <label>1</label>
    </ligand>
</feature>
<feature type="binding site" evidence="1">
    <location>
        <position position="414"/>
    </location>
    <ligand>
        <name>Mg(2+)</name>
        <dbReference type="ChEBI" id="CHEBI:18420"/>
        <label>1</label>
    </ligand>
</feature>
<feature type="binding site" evidence="1">
    <location>
        <position position="414"/>
    </location>
    <ligand>
        <name>Mg(2+)</name>
        <dbReference type="ChEBI" id="CHEBI:18420"/>
        <label>2</label>
    </ligand>
</feature>
<keyword id="KW-0030">Aminoacyl-tRNA synthetase</keyword>
<keyword id="KW-0067">ATP-binding</keyword>
<keyword id="KW-0963">Cytoplasm</keyword>
<keyword id="KW-0436">Ligase</keyword>
<keyword id="KW-0460">Magnesium</keyword>
<keyword id="KW-0479">Metal-binding</keyword>
<keyword id="KW-0547">Nucleotide-binding</keyword>
<keyword id="KW-0648">Protein biosynthesis</keyword>
<keyword id="KW-1185">Reference proteome</keyword>
<accession>Q9CII7</accession>
<organism>
    <name type="scientific">Lactococcus lactis subsp. lactis (strain IL1403)</name>
    <name type="common">Streptococcus lactis</name>
    <dbReference type="NCBI Taxonomy" id="272623"/>
    <lineage>
        <taxon>Bacteria</taxon>
        <taxon>Bacillati</taxon>
        <taxon>Bacillota</taxon>
        <taxon>Bacilli</taxon>
        <taxon>Lactobacillales</taxon>
        <taxon>Streptococcaceae</taxon>
        <taxon>Lactococcus</taxon>
    </lineage>
</organism>
<protein>
    <recommendedName>
        <fullName evidence="1">Lysine--tRNA ligase</fullName>
        <ecNumber evidence="1">6.1.1.6</ecNumber>
    </recommendedName>
    <alternativeName>
        <fullName evidence="1">Lysyl-tRNA synthetase</fullName>
        <shortName evidence="1">LysRS</shortName>
    </alternativeName>
</protein>